<proteinExistence type="inferred from homology"/>
<comment type="function">
    <text evidence="1">Required for the formation of a threonylcarbamoyl group on adenosine at position 37 (t(6)A37) in tRNAs that read codons beginning with adenine. Is involved in the transfer of the threonylcarbamoyl moiety of threonylcarbamoyl-AMP (TC-AMP) to the N6 group of A37, together with TsaE and TsaB. TsaD likely plays a direct catalytic role in this reaction.</text>
</comment>
<comment type="catalytic activity">
    <reaction evidence="1">
        <text>L-threonylcarbamoyladenylate + adenosine(37) in tRNA = N(6)-L-threonylcarbamoyladenosine(37) in tRNA + AMP + H(+)</text>
        <dbReference type="Rhea" id="RHEA:37059"/>
        <dbReference type="Rhea" id="RHEA-COMP:10162"/>
        <dbReference type="Rhea" id="RHEA-COMP:10163"/>
        <dbReference type="ChEBI" id="CHEBI:15378"/>
        <dbReference type="ChEBI" id="CHEBI:73682"/>
        <dbReference type="ChEBI" id="CHEBI:74411"/>
        <dbReference type="ChEBI" id="CHEBI:74418"/>
        <dbReference type="ChEBI" id="CHEBI:456215"/>
        <dbReference type="EC" id="2.3.1.234"/>
    </reaction>
</comment>
<comment type="cofactor">
    <cofactor evidence="1">
        <name>Fe(2+)</name>
        <dbReference type="ChEBI" id="CHEBI:29033"/>
    </cofactor>
    <text evidence="1">Binds 1 Fe(2+) ion per subunit.</text>
</comment>
<comment type="subcellular location">
    <subcellularLocation>
        <location evidence="1">Cytoplasm</location>
    </subcellularLocation>
</comment>
<comment type="similarity">
    <text evidence="1">Belongs to the KAE1 / TsaD family.</text>
</comment>
<reference key="1">
    <citation type="submission" date="2007-07" db="EMBL/GenBank/DDBJ databases">
        <title>Genome sequence of Campylobacter curvus 525.92 isolated from human feces.</title>
        <authorList>
            <person name="Fouts D.E."/>
            <person name="Mongodin E.F."/>
            <person name="Puiu D."/>
            <person name="Sebastian Y."/>
            <person name="Miller W.G."/>
            <person name="Mandrell R.E."/>
            <person name="Lastovica A.J."/>
            <person name="Nelson K.E."/>
        </authorList>
    </citation>
    <scope>NUCLEOTIDE SEQUENCE [LARGE SCALE GENOMIC DNA]</scope>
    <source>
        <strain>525.92</strain>
    </source>
</reference>
<name>TSAD_CAMC5</name>
<evidence type="ECO:0000255" key="1">
    <source>
        <dbReference type="HAMAP-Rule" id="MF_01445"/>
    </source>
</evidence>
<organism>
    <name type="scientific">Campylobacter curvus (strain 525.92)</name>
    <dbReference type="NCBI Taxonomy" id="360105"/>
    <lineage>
        <taxon>Bacteria</taxon>
        <taxon>Pseudomonadati</taxon>
        <taxon>Campylobacterota</taxon>
        <taxon>Epsilonproteobacteria</taxon>
        <taxon>Campylobacterales</taxon>
        <taxon>Campylobacteraceae</taxon>
        <taxon>Campylobacter</taxon>
    </lineage>
</organism>
<accession>A7H0K1</accession>
<dbReference type="EC" id="2.3.1.234" evidence="1"/>
<dbReference type="EMBL" id="CP000767">
    <property type="protein sequence ID" value="EAU01334.1"/>
    <property type="molecule type" value="Genomic_DNA"/>
</dbReference>
<dbReference type="RefSeq" id="WP_011992747.1">
    <property type="nucleotide sequence ID" value="NC_009715.2"/>
</dbReference>
<dbReference type="SMR" id="A7H0K1"/>
<dbReference type="STRING" id="360105.CCV52592_0591"/>
<dbReference type="KEGG" id="ccv:CCV52592_0591"/>
<dbReference type="HOGENOM" id="CLU_023208_0_3_7"/>
<dbReference type="OrthoDB" id="9806197at2"/>
<dbReference type="Proteomes" id="UP000006380">
    <property type="component" value="Chromosome"/>
</dbReference>
<dbReference type="GO" id="GO:0005737">
    <property type="term" value="C:cytoplasm"/>
    <property type="evidence" value="ECO:0007669"/>
    <property type="project" value="UniProtKB-SubCell"/>
</dbReference>
<dbReference type="GO" id="GO:0005506">
    <property type="term" value="F:iron ion binding"/>
    <property type="evidence" value="ECO:0007669"/>
    <property type="project" value="UniProtKB-UniRule"/>
</dbReference>
<dbReference type="GO" id="GO:0061711">
    <property type="term" value="F:N(6)-L-threonylcarbamoyladenine synthase activity"/>
    <property type="evidence" value="ECO:0007669"/>
    <property type="project" value="UniProtKB-EC"/>
</dbReference>
<dbReference type="GO" id="GO:0002949">
    <property type="term" value="P:tRNA threonylcarbamoyladenosine modification"/>
    <property type="evidence" value="ECO:0007669"/>
    <property type="project" value="UniProtKB-UniRule"/>
</dbReference>
<dbReference type="Gene3D" id="3.30.420.40">
    <property type="match status" value="2"/>
</dbReference>
<dbReference type="HAMAP" id="MF_01445">
    <property type="entry name" value="TsaD"/>
    <property type="match status" value="1"/>
</dbReference>
<dbReference type="InterPro" id="IPR043129">
    <property type="entry name" value="ATPase_NBD"/>
</dbReference>
<dbReference type="InterPro" id="IPR000905">
    <property type="entry name" value="Gcp-like_dom"/>
</dbReference>
<dbReference type="InterPro" id="IPR017861">
    <property type="entry name" value="KAE1/TsaD"/>
</dbReference>
<dbReference type="InterPro" id="IPR017860">
    <property type="entry name" value="Peptidase_M22_CS"/>
</dbReference>
<dbReference type="InterPro" id="IPR022450">
    <property type="entry name" value="TsaD"/>
</dbReference>
<dbReference type="NCBIfam" id="TIGR00329">
    <property type="entry name" value="gcp_kae1"/>
    <property type="match status" value="1"/>
</dbReference>
<dbReference type="NCBIfam" id="TIGR03723">
    <property type="entry name" value="T6A_TsaD_YgjD"/>
    <property type="match status" value="1"/>
</dbReference>
<dbReference type="PANTHER" id="PTHR11735">
    <property type="entry name" value="TRNA N6-ADENOSINE THREONYLCARBAMOYLTRANSFERASE"/>
    <property type="match status" value="1"/>
</dbReference>
<dbReference type="PANTHER" id="PTHR11735:SF6">
    <property type="entry name" value="TRNA N6-ADENOSINE THREONYLCARBAMOYLTRANSFERASE, MITOCHONDRIAL"/>
    <property type="match status" value="1"/>
</dbReference>
<dbReference type="Pfam" id="PF00814">
    <property type="entry name" value="TsaD"/>
    <property type="match status" value="1"/>
</dbReference>
<dbReference type="PRINTS" id="PR00789">
    <property type="entry name" value="OSIALOPTASE"/>
</dbReference>
<dbReference type="SUPFAM" id="SSF53067">
    <property type="entry name" value="Actin-like ATPase domain"/>
    <property type="match status" value="1"/>
</dbReference>
<dbReference type="PROSITE" id="PS01016">
    <property type="entry name" value="GLYCOPROTEASE"/>
    <property type="match status" value="1"/>
</dbReference>
<gene>
    <name evidence="1" type="primary">tsaD</name>
    <name type="synonym">gcp</name>
    <name type="ordered locus">Ccur92_16890</name>
    <name type="ORF">CCV52592_0591</name>
</gene>
<protein>
    <recommendedName>
        <fullName evidence="1">tRNA N6-adenosine threonylcarbamoyltransferase</fullName>
        <ecNumber evidence="1">2.3.1.234</ecNumber>
    </recommendedName>
    <alternativeName>
        <fullName evidence="1">N6-L-threonylcarbamoyladenine synthase</fullName>
        <shortName evidence="1">t(6)A synthase</shortName>
    </alternativeName>
    <alternativeName>
        <fullName evidence="1">t(6)A37 threonylcarbamoyladenosine biosynthesis protein TsaD</fullName>
    </alternativeName>
    <alternativeName>
        <fullName evidence="1">tRNA threonylcarbamoyladenosine biosynthesis protein TsaD</fullName>
    </alternativeName>
</protein>
<sequence>MILGIESSCDDSSVALLDIKNLKLLYHKKISQESEHSPFGGVVPELAARLHTRALPALLEEIKPKFKDIKAIAVTNEPGLSVSLIGGVSMAKALSVALNVPLIAVNHLVGHIYSLFLDCEARFPLGVLLVSGGHTMVLDIDAAGKISLLAGTSDDSFGESFDKVAKMMQLGYPGGAAVQNLAWQCKDKRRFKFTIPFLHDKRLEYSFSGLKNQVRLEIEKIKGQNLAGATDRELSNDDMADICYAFENAACEHIMDKLTKIFKERSFKRFGIVGGASANLNLRSRIERLCLENGCELLLAPLEFCSDNAAMIARAGREKYLKGGFVKHNELNINPRVKF</sequence>
<keyword id="KW-0012">Acyltransferase</keyword>
<keyword id="KW-0963">Cytoplasm</keyword>
<keyword id="KW-0408">Iron</keyword>
<keyword id="KW-0479">Metal-binding</keyword>
<keyword id="KW-1185">Reference proteome</keyword>
<keyword id="KW-0808">Transferase</keyword>
<keyword id="KW-0819">tRNA processing</keyword>
<feature type="chain" id="PRO_1000024426" description="tRNA N6-adenosine threonylcarbamoyltransferase">
    <location>
        <begin position="1"/>
        <end position="339"/>
    </location>
</feature>
<feature type="binding site" evidence="1">
    <location>
        <position position="107"/>
    </location>
    <ligand>
        <name>Fe cation</name>
        <dbReference type="ChEBI" id="CHEBI:24875"/>
    </ligand>
</feature>
<feature type="binding site" evidence="1">
    <location>
        <position position="111"/>
    </location>
    <ligand>
        <name>Fe cation</name>
        <dbReference type="ChEBI" id="CHEBI:24875"/>
    </ligand>
</feature>
<feature type="binding site" evidence="1">
    <location>
        <begin position="129"/>
        <end position="133"/>
    </location>
    <ligand>
        <name>substrate</name>
    </ligand>
</feature>
<feature type="binding site" evidence="1">
    <location>
        <position position="162"/>
    </location>
    <ligand>
        <name>substrate</name>
    </ligand>
</feature>
<feature type="binding site" evidence="1">
    <location>
        <position position="175"/>
    </location>
    <ligand>
        <name>substrate</name>
    </ligand>
</feature>
<feature type="binding site" evidence="1">
    <location>
        <position position="279"/>
    </location>
    <ligand>
        <name>substrate</name>
    </ligand>
</feature>
<feature type="binding site" evidence="1">
    <location>
        <position position="307"/>
    </location>
    <ligand>
        <name>Fe cation</name>
        <dbReference type="ChEBI" id="CHEBI:24875"/>
    </ligand>
</feature>